<accession>A7ZTS1</accession>
<organism>
    <name type="scientific">Escherichia coli O139:H28 (strain E24377A / ETEC)</name>
    <dbReference type="NCBI Taxonomy" id="331111"/>
    <lineage>
        <taxon>Bacteria</taxon>
        <taxon>Pseudomonadati</taxon>
        <taxon>Pseudomonadota</taxon>
        <taxon>Gammaproteobacteria</taxon>
        <taxon>Enterobacterales</taxon>
        <taxon>Enterobacteriaceae</taxon>
        <taxon>Escherichia</taxon>
    </lineage>
</organism>
<gene>
    <name type="primary">cbrB</name>
    <name type="ordered locus">EcE24377A_4225</name>
</gene>
<reference key="1">
    <citation type="journal article" date="2008" name="J. Bacteriol.">
        <title>The pangenome structure of Escherichia coli: comparative genomic analysis of E. coli commensal and pathogenic isolates.</title>
        <authorList>
            <person name="Rasko D.A."/>
            <person name="Rosovitz M.J."/>
            <person name="Myers G.S.A."/>
            <person name="Mongodin E.F."/>
            <person name="Fricke W.F."/>
            <person name="Gajer P."/>
            <person name="Crabtree J."/>
            <person name="Sebaihia M."/>
            <person name="Thomson N.R."/>
            <person name="Chaudhuri R."/>
            <person name="Henderson I.R."/>
            <person name="Sperandio V."/>
            <person name="Ravel J."/>
        </authorList>
    </citation>
    <scope>NUCLEOTIDE SEQUENCE [LARGE SCALE GENOMIC DNA]</scope>
    <source>
        <strain>E24377A / ETEC</strain>
    </source>
</reference>
<comment type="subcellular location">
    <subcellularLocation>
        <location evidence="1">Cell inner membrane</location>
        <topology evidence="1">Multi-pass membrane protein</topology>
    </subcellularLocation>
</comment>
<comment type="similarity">
    <text evidence="3">Belongs to the CbrB family.</text>
</comment>
<evidence type="ECO:0000250" key="1"/>
<evidence type="ECO:0000255" key="2"/>
<evidence type="ECO:0000305" key="3"/>
<dbReference type="EMBL" id="CP000800">
    <property type="protein sequence ID" value="ABV17159.1"/>
    <property type="molecule type" value="Genomic_DNA"/>
</dbReference>
<dbReference type="RefSeq" id="WP_000116768.1">
    <property type="nucleotide sequence ID" value="NC_009801.1"/>
</dbReference>
<dbReference type="KEGG" id="ecw:EcE24377A_4225"/>
<dbReference type="HOGENOM" id="CLU_139024_0_0_6"/>
<dbReference type="Proteomes" id="UP000001122">
    <property type="component" value="Chromosome"/>
</dbReference>
<dbReference type="GO" id="GO:0005886">
    <property type="term" value="C:plasma membrane"/>
    <property type="evidence" value="ECO:0007669"/>
    <property type="project" value="UniProtKB-SubCell"/>
</dbReference>
<dbReference type="NCBIfam" id="NF007334">
    <property type="entry name" value="PRK09823.1"/>
    <property type="match status" value="1"/>
</dbReference>
<sequence>MSVSRRVIHHGLYFAVLGPLIGVLFLVLYIFFAKEPLVLLVIIQVLPLFLLLSITTGAIPALLTCVMVACLPEKIGSQKNYRCLAGGIGGVVITEIYCAVIVHIKGMASSELFENILSGDSLVVRIIPALLAGVVMSRIITRLPGLDISCPETDSLS</sequence>
<protein>
    <recommendedName>
        <fullName>Inner membrane protein CbrB</fullName>
    </recommendedName>
</protein>
<proteinExistence type="inferred from homology"/>
<feature type="chain" id="PRO_0000320699" description="Inner membrane protein CbrB">
    <location>
        <begin position="1"/>
        <end position="157"/>
    </location>
</feature>
<feature type="topological domain" description="Cytoplasmic" evidence="2">
    <location>
        <begin position="1"/>
        <end position="11"/>
    </location>
</feature>
<feature type="transmembrane region" description="Helical" evidence="2">
    <location>
        <begin position="12"/>
        <end position="32"/>
    </location>
</feature>
<feature type="topological domain" description="Periplasmic" evidence="2">
    <location>
        <begin position="33"/>
        <end position="36"/>
    </location>
</feature>
<feature type="transmembrane region" description="Helical" evidence="2">
    <location>
        <begin position="37"/>
        <end position="57"/>
    </location>
</feature>
<feature type="topological domain" description="Cytoplasmic" evidence="2">
    <location>
        <begin position="58"/>
        <end position="83"/>
    </location>
</feature>
<feature type="transmembrane region" description="Helical" evidence="2">
    <location>
        <begin position="84"/>
        <end position="104"/>
    </location>
</feature>
<feature type="topological domain" description="Periplasmic" evidence="2">
    <location>
        <begin position="105"/>
        <end position="115"/>
    </location>
</feature>
<feature type="transmembrane region" description="Helical" evidence="2">
    <location>
        <begin position="116"/>
        <end position="136"/>
    </location>
</feature>
<feature type="topological domain" description="Cytoplasmic" evidence="2">
    <location>
        <begin position="137"/>
        <end position="157"/>
    </location>
</feature>
<name>CBRB_ECO24</name>
<keyword id="KW-0997">Cell inner membrane</keyword>
<keyword id="KW-1003">Cell membrane</keyword>
<keyword id="KW-0472">Membrane</keyword>
<keyword id="KW-1185">Reference proteome</keyword>
<keyword id="KW-0812">Transmembrane</keyword>
<keyword id="KW-1133">Transmembrane helix</keyword>